<reference key="1">
    <citation type="journal article" date="1991" name="Biochem. Biophys. Res. Commun.">
        <title>The primary structure of Tetrahymena profilin.</title>
        <authorList>
            <person name="Edamatsu M."/>
            <person name="Hirono M."/>
            <person name="Takemasa T."/>
            <person name="Watanabe Y."/>
        </authorList>
    </citation>
    <scope>NUCLEOTIDE SEQUENCE [MRNA]</scope>
</reference>
<protein>
    <recommendedName>
        <fullName>Profilin</fullName>
    </recommendedName>
</protein>
<feature type="chain" id="PRO_0000199604" description="Profilin">
    <location>
        <begin position="1"/>
        <end position="153"/>
    </location>
</feature>
<accession>P23412</accession>
<evidence type="ECO:0000305" key="1"/>
<comment type="function">
    <text>Binds to actin and affects the structure of the cytoskeleton. At high concentrations, profilin prevents the polymerization of actin, whereas it enhances it at low concentrations. By binding to PIP2, it inhibits the formation of IP3 and DG.</text>
</comment>
<comment type="subunit">
    <text>Occurs in many kinds of cells as a complex with monomeric actin in a 1:1 ratio.</text>
</comment>
<comment type="subcellular location">
    <subcellularLocation>
        <location>Cytoplasm</location>
        <location>Cytoskeleton</location>
    </subcellularLocation>
</comment>
<comment type="similarity">
    <text evidence="1">Belongs to the profilin family.</text>
</comment>
<organism>
    <name type="scientific">Tetrahymena pyriformis</name>
    <dbReference type="NCBI Taxonomy" id="5908"/>
    <lineage>
        <taxon>Eukaryota</taxon>
        <taxon>Sar</taxon>
        <taxon>Alveolata</taxon>
        <taxon>Ciliophora</taxon>
        <taxon>Intramacronucleata</taxon>
        <taxon>Oligohymenophorea</taxon>
        <taxon>Hymenostomatida</taxon>
        <taxon>Tetrahymenina</taxon>
        <taxon>Tetrahymenidae</taxon>
        <taxon>Tetrahymena</taxon>
    </lineage>
</organism>
<name>PROF_TETPY</name>
<dbReference type="EMBL" id="D00813">
    <property type="protein sequence ID" value="BAA00694.1"/>
    <property type="molecule type" value="mRNA"/>
</dbReference>
<dbReference type="PIR" id="JT0572">
    <property type="entry name" value="JT0572"/>
</dbReference>
<dbReference type="SMR" id="P23412"/>
<dbReference type="GO" id="GO:0005938">
    <property type="term" value="C:cell cortex"/>
    <property type="evidence" value="ECO:0007669"/>
    <property type="project" value="TreeGrafter"/>
</dbReference>
<dbReference type="GO" id="GO:0005856">
    <property type="term" value="C:cytoskeleton"/>
    <property type="evidence" value="ECO:0007669"/>
    <property type="project" value="UniProtKB-SubCell"/>
</dbReference>
<dbReference type="GO" id="GO:0003785">
    <property type="term" value="F:actin monomer binding"/>
    <property type="evidence" value="ECO:0007669"/>
    <property type="project" value="TreeGrafter"/>
</dbReference>
<dbReference type="CDD" id="cd00148">
    <property type="entry name" value="PROF"/>
    <property type="match status" value="1"/>
</dbReference>
<dbReference type="Gene3D" id="3.30.450.30">
    <property type="entry name" value="Dynein light chain 2a, cytoplasmic"/>
    <property type="match status" value="1"/>
</dbReference>
<dbReference type="InterPro" id="IPR048278">
    <property type="entry name" value="PFN"/>
</dbReference>
<dbReference type="InterPro" id="IPR005455">
    <property type="entry name" value="PFN_euk"/>
</dbReference>
<dbReference type="InterPro" id="IPR036140">
    <property type="entry name" value="PFN_sf"/>
</dbReference>
<dbReference type="InterPro" id="IPR027310">
    <property type="entry name" value="Profilin_CS"/>
</dbReference>
<dbReference type="PANTHER" id="PTHR11604">
    <property type="entry name" value="PROFILIN"/>
    <property type="match status" value="1"/>
</dbReference>
<dbReference type="PANTHER" id="PTHR11604:SF0">
    <property type="entry name" value="PROFILIN"/>
    <property type="match status" value="1"/>
</dbReference>
<dbReference type="Pfam" id="PF00235">
    <property type="entry name" value="Profilin"/>
    <property type="match status" value="1"/>
</dbReference>
<dbReference type="SMART" id="SM00392">
    <property type="entry name" value="PROF"/>
    <property type="match status" value="1"/>
</dbReference>
<dbReference type="SUPFAM" id="SSF55770">
    <property type="entry name" value="Profilin (actin-binding protein)"/>
    <property type="match status" value="1"/>
</dbReference>
<dbReference type="PROSITE" id="PS00414">
    <property type="entry name" value="PROFILIN"/>
    <property type="match status" value="1"/>
</dbReference>
<keyword id="KW-0009">Actin-binding</keyword>
<keyword id="KW-0963">Cytoplasm</keyword>
<keyword id="KW-0206">Cytoskeleton</keyword>
<sequence>MSGWDQYVQYLTANQQVEYGLILGKTDGTIWASNVGLTTLYNNYQIDVEGQKANVNETANLLAAMNNNGVPTDPLCGIRIMNQKYYTVKYDADSQVWYLKKDHGGACIAITNQALVIGTFDITKKQQNGVAQNPGQVNKVVESLAATLKQAGY</sequence>
<proteinExistence type="evidence at transcript level"/>